<gene>
    <name type="primary">GDH1</name>
</gene>
<keyword id="KW-0520">NAD</keyword>
<keyword id="KW-0560">Oxidoreductase</keyword>
<keyword id="KW-1185">Reference proteome</keyword>
<protein>
    <recommendedName>
        <fullName>Glutamate dehydrogenase</fullName>
        <shortName>GDH</shortName>
        <ecNumber>1.4.1.3</ecNumber>
    </recommendedName>
</protein>
<name>DHE3_MAIZE</name>
<accession>Q43260</accession>
<accession>O04871</accession>
<accession>O04872</accession>
<sequence length="411" mass="44022">MNALAATSRNFKQAAKLLGLDSKLEKSLLIPFREIKVECTIPKDDGTLASYVGFRVQHDNARGPMKGGIRYHHEVDPDEVNALAQLMTWKTAVANIPYGGAKGGIGCSPGDLSISELERLTRVFTQKIHDLIGIHTDVPAPDMGTNSQTMAWILDEYSKFHGYSPAVVTGKPVDLGGSLGRDAATGRGVLFATEALLAEHGKGIAGQRFVIQGFGNVGSWAAQLISEAGGKVIAISDVTGAVKNVDGLDIAQLVKHSAENKGIKGFKGGDAIAPDSLLTEECDVLIPAALGGVINKDNANDIKAKYIIEAANHPTDPEADEILSKKGVLILPDILANSGGVTVSYFEWVQNIQGFMWDEEKVNAELRTYITRAFGNVKQMCRSHSCDLRMGAFTLGVNRVARATVLRGWEA</sequence>
<evidence type="ECO:0000255" key="1">
    <source>
        <dbReference type="PROSITE-ProRule" id="PRU10011"/>
    </source>
</evidence>
<evidence type="ECO:0000305" key="2"/>
<proteinExistence type="evidence at protein level"/>
<comment type="catalytic activity">
    <reaction evidence="1">
        <text>L-glutamate + NAD(+) + H2O = 2-oxoglutarate + NH4(+) + NADH + H(+)</text>
        <dbReference type="Rhea" id="RHEA:15133"/>
        <dbReference type="ChEBI" id="CHEBI:15377"/>
        <dbReference type="ChEBI" id="CHEBI:15378"/>
        <dbReference type="ChEBI" id="CHEBI:16810"/>
        <dbReference type="ChEBI" id="CHEBI:28938"/>
        <dbReference type="ChEBI" id="CHEBI:29985"/>
        <dbReference type="ChEBI" id="CHEBI:57540"/>
        <dbReference type="ChEBI" id="CHEBI:57945"/>
        <dbReference type="EC" id="1.4.1.3"/>
    </reaction>
</comment>
<comment type="catalytic activity">
    <reaction evidence="1">
        <text>L-glutamate + NADP(+) + H2O = 2-oxoglutarate + NH4(+) + NADPH + H(+)</text>
        <dbReference type="Rhea" id="RHEA:11612"/>
        <dbReference type="ChEBI" id="CHEBI:15377"/>
        <dbReference type="ChEBI" id="CHEBI:15378"/>
        <dbReference type="ChEBI" id="CHEBI:16810"/>
        <dbReference type="ChEBI" id="CHEBI:28938"/>
        <dbReference type="ChEBI" id="CHEBI:29985"/>
        <dbReference type="ChEBI" id="CHEBI:57783"/>
        <dbReference type="ChEBI" id="CHEBI:58349"/>
        <dbReference type="EC" id="1.4.1.3"/>
    </reaction>
</comment>
<comment type="similarity">
    <text evidence="2">Belongs to the Glu/Leu/Phe/Val dehydrogenases family.</text>
</comment>
<reference key="1">
    <citation type="journal article" date="1995" name="Plant Cell Physiol.">
        <title>Isolation and characterization of a cDNA that encodes maize glutamate dehydrogenase.</title>
        <authorList>
            <person name="Sakakibara H."/>
            <person name="Fujii K."/>
            <person name="Sugiyama T."/>
        </authorList>
    </citation>
    <scope>NUCLEOTIDE SEQUENCE [MRNA]</scope>
    <source>
        <strain>cv. Golden cross Bantam T51</strain>
        <tissue>Root</tissue>
    </source>
</reference>
<reference key="2">
    <citation type="submission" date="1997-03" db="EMBL/GenBank/DDBJ databases">
        <title>Characterization of a GDH1-mutant in maize.</title>
        <authorList>
            <person name="Ju G.C."/>
        </authorList>
    </citation>
    <scope>NUCLEOTIDE SEQUENCE [MRNA]</scope>
    <scope>MUTANT GDH1</scope>
    <source>
        <strain>cv. P-10 Inbred</strain>
        <tissue>Shoot</tissue>
    </source>
</reference>
<organism>
    <name type="scientific">Zea mays</name>
    <name type="common">Maize</name>
    <dbReference type="NCBI Taxonomy" id="4577"/>
    <lineage>
        <taxon>Eukaryota</taxon>
        <taxon>Viridiplantae</taxon>
        <taxon>Streptophyta</taxon>
        <taxon>Embryophyta</taxon>
        <taxon>Tracheophyta</taxon>
        <taxon>Spermatophyta</taxon>
        <taxon>Magnoliopsida</taxon>
        <taxon>Liliopsida</taxon>
        <taxon>Poales</taxon>
        <taxon>Poaceae</taxon>
        <taxon>PACMAD clade</taxon>
        <taxon>Panicoideae</taxon>
        <taxon>Andropogonodae</taxon>
        <taxon>Andropogoneae</taxon>
        <taxon>Tripsacinae</taxon>
        <taxon>Zea</taxon>
    </lineage>
</organism>
<dbReference type="EC" id="1.4.1.3"/>
<dbReference type="EMBL" id="D49475">
    <property type="protein sequence ID" value="BAA08445.1"/>
    <property type="molecule type" value="mRNA"/>
</dbReference>
<dbReference type="EMBL" id="U93560">
    <property type="protein sequence ID" value="AAB51595.1"/>
    <property type="molecule type" value="mRNA"/>
</dbReference>
<dbReference type="EMBL" id="U93561">
    <property type="protein sequence ID" value="AAB51596.1"/>
    <property type="molecule type" value="mRNA"/>
</dbReference>
<dbReference type="PIR" id="T03294">
    <property type="entry name" value="T03294"/>
</dbReference>
<dbReference type="PIR" id="T04342">
    <property type="entry name" value="T04342"/>
</dbReference>
<dbReference type="RefSeq" id="NP_001105301.1">
    <property type="nucleotide sequence ID" value="NM_001111831.1"/>
</dbReference>
<dbReference type="SMR" id="Q43260"/>
<dbReference type="FunCoup" id="Q43260">
    <property type="interactions" value="1917"/>
</dbReference>
<dbReference type="STRING" id="4577.Q43260"/>
<dbReference type="PaxDb" id="4577-GRMZM2G178415_P01"/>
<dbReference type="GeneID" id="542220"/>
<dbReference type="KEGG" id="zma:542220"/>
<dbReference type="MaizeGDB" id="12238"/>
<dbReference type="eggNOG" id="KOG2250">
    <property type="taxonomic scope" value="Eukaryota"/>
</dbReference>
<dbReference type="InParanoid" id="Q43260"/>
<dbReference type="OrthoDB" id="6718861at2759"/>
<dbReference type="Proteomes" id="UP000007305">
    <property type="component" value="Unplaced"/>
</dbReference>
<dbReference type="ExpressionAtlas" id="Q43260">
    <property type="expression patterns" value="baseline and differential"/>
</dbReference>
<dbReference type="GO" id="GO:0005739">
    <property type="term" value="C:mitochondrion"/>
    <property type="evidence" value="ECO:0000318"/>
    <property type="project" value="GO_Central"/>
</dbReference>
<dbReference type="GO" id="GO:0004352">
    <property type="term" value="F:glutamate dehydrogenase (NAD+) activity"/>
    <property type="evidence" value="ECO:0000318"/>
    <property type="project" value="GO_Central"/>
</dbReference>
<dbReference type="GO" id="GO:0004354">
    <property type="term" value="F:glutamate dehydrogenase (NADP+) activity"/>
    <property type="evidence" value="ECO:0007669"/>
    <property type="project" value="RHEA"/>
</dbReference>
<dbReference type="GO" id="GO:0006538">
    <property type="term" value="P:glutamate catabolic process"/>
    <property type="evidence" value="ECO:0000318"/>
    <property type="project" value="GO_Central"/>
</dbReference>
<dbReference type="CDD" id="cd01076">
    <property type="entry name" value="NAD_bind_1_Glu_DH"/>
    <property type="match status" value="1"/>
</dbReference>
<dbReference type="FunFam" id="3.40.50.10860:FF:000003">
    <property type="entry name" value="Glutamate dehydrogenase"/>
    <property type="match status" value="1"/>
</dbReference>
<dbReference type="FunFam" id="3.40.50.720:FF:000212">
    <property type="entry name" value="Glutamate dehydrogenase"/>
    <property type="match status" value="1"/>
</dbReference>
<dbReference type="Gene3D" id="3.40.50.10860">
    <property type="entry name" value="Leucine Dehydrogenase, chain A, domain 1"/>
    <property type="match status" value="1"/>
</dbReference>
<dbReference type="Gene3D" id="3.40.50.720">
    <property type="entry name" value="NAD(P)-binding Rossmann-like Domain"/>
    <property type="match status" value="1"/>
</dbReference>
<dbReference type="InterPro" id="IPR046346">
    <property type="entry name" value="Aminoacid_DH-like_N_sf"/>
</dbReference>
<dbReference type="InterPro" id="IPR006095">
    <property type="entry name" value="Glu/Leu/Phe/Val/Trp_DH"/>
</dbReference>
<dbReference type="InterPro" id="IPR006096">
    <property type="entry name" value="Glu/Leu/Phe/Val/Trp_DH_C"/>
</dbReference>
<dbReference type="InterPro" id="IPR006097">
    <property type="entry name" value="Glu/Leu/Phe/Val/Trp_DH_dimer"/>
</dbReference>
<dbReference type="InterPro" id="IPR033524">
    <property type="entry name" value="Glu/Leu/Phe/Val_DH_AS"/>
</dbReference>
<dbReference type="InterPro" id="IPR014362">
    <property type="entry name" value="Glu_DH"/>
</dbReference>
<dbReference type="InterPro" id="IPR036291">
    <property type="entry name" value="NAD(P)-bd_dom_sf"/>
</dbReference>
<dbReference type="InterPro" id="IPR033922">
    <property type="entry name" value="NAD_bind_Glu_DH"/>
</dbReference>
<dbReference type="PANTHER" id="PTHR11606">
    <property type="entry name" value="GLUTAMATE DEHYDROGENASE"/>
    <property type="match status" value="1"/>
</dbReference>
<dbReference type="PANTHER" id="PTHR11606:SF29">
    <property type="entry name" value="GLUTAMATE DEHYDROGENASE 3-RELATED"/>
    <property type="match status" value="1"/>
</dbReference>
<dbReference type="Pfam" id="PF00208">
    <property type="entry name" value="ELFV_dehydrog"/>
    <property type="match status" value="1"/>
</dbReference>
<dbReference type="Pfam" id="PF02812">
    <property type="entry name" value="ELFV_dehydrog_N"/>
    <property type="match status" value="1"/>
</dbReference>
<dbReference type="PIRSF" id="PIRSF000185">
    <property type="entry name" value="Glu_DH"/>
    <property type="match status" value="1"/>
</dbReference>
<dbReference type="PRINTS" id="PR00082">
    <property type="entry name" value="GLFDHDRGNASE"/>
</dbReference>
<dbReference type="SMART" id="SM00839">
    <property type="entry name" value="ELFV_dehydrog"/>
    <property type="match status" value="1"/>
</dbReference>
<dbReference type="SUPFAM" id="SSF53223">
    <property type="entry name" value="Aminoacid dehydrogenase-like, N-terminal domain"/>
    <property type="match status" value="1"/>
</dbReference>
<dbReference type="SUPFAM" id="SSF51735">
    <property type="entry name" value="NAD(P)-binding Rossmann-fold domains"/>
    <property type="match status" value="1"/>
</dbReference>
<dbReference type="PROSITE" id="PS00074">
    <property type="entry name" value="GLFV_DEHYDROGENASE"/>
    <property type="match status" value="1"/>
</dbReference>
<feature type="chain" id="PRO_0000182749" description="Glutamate dehydrogenase">
    <location>
        <begin position="1"/>
        <end position="411"/>
    </location>
</feature>
<feature type="active site" evidence="1">
    <location>
        <position position="102"/>
    </location>
</feature>
<feature type="sequence variant" description="In strain: cv. P-10 Inbred.">
    <original>L</original>
    <variation>V</variation>
    <location>
        <position position="18"/>
    </location>
</feature>
<feature type="sequence variant" description="In strain: cv. P-10 Inbred.">
    <original>I</original>
    <variation>M</variation>
    <location>
        <position position="370"/>
    </location>
</feature>
<feature type="sequence variant" description="In strain: cv. P-10 Inbred.">
    <original>N</original>
    <variation>D</variation>
    <location>
        <position position="376"/>
    </location>
</feature>
<feature type="mutagenesis site" description="In GDH1.">
    <original>G</original>
    <variation>R</variation>
    <location>
        <position position="188"/>
    </location>
</feature>
<feature type="mutagenesis site" description="In GDH1.">
    <original>D</original>
    <variation>G</variation>
    <location>
        <position position="246"/>
    </location>
</feature>
<feature type="mutagenesis site" description="In GDH1.">
    <original>QL</original>
    <variation>EV</variation>
    <location>
        <begin position="252"/>
        <end position="253"/>
    </location>
</feature>
<feature type="mutagenesis site" description="In GDH1.">
    <original>R</original>
    <variation>Q</variation>
    <location>
        <position position="367"/>
    </location>
</feature>